<protein>
    <recommendedName>
        <fullName evidence="1">Large ribosomal subunit protein bL21</fullName>
    </recommendedName>
    <alternativeName>
        <fullName evidence="2">50S ribosomal protein L21</fullName>
    </alternativeName>
</protein>
<organism>
    <name type="scientific">Clostridium tetani (strain Massachusetts / E88)</name>
    <dbReference type="NCBI Taxonomy" id="212717"/>
    <lineage>
        <taxon>Bacteria</taxon>
        <taxon>Bacillati</taxon>
        <taxon>Bacillota</taxon>
        <taxon>Clostridia</taxon>
        <taxon>Eubacteriales</taxon>
        <taxon>Clostridiaceae</taxon>
        <taxon>Clostridium</taxon>
    </lineage>
</organism>
<proteinExistence type="inferred from homology"/>
<sequence length="104" mass="11587">MYAVVVTGGKQYKVTEGDVLFVEKLDAEVDAAIELDNVLAISKDNGEFVVGKPVVEGAKVTAKVLKQGKAKKVVVFKYKPKKHYRKKQGHRQPYTKIQIEKINA</sequence>
<name>RL21_CLOTE</name>
<keyword id="KW-1185">Reference proteome</keyword>
<keyword id="KW-0687">Ribonucleoprotein</keyword>
<keyword id="KW-0689">Ribosomal protein</keyword>
<keyword id="KW-0694">RNA-binding</keyword>
<keyword id="KW-0699">rRNA-binding</keyword>
<evidence type="ECO:0000255" key="1">
    <source>
        <dbReference type="HAMAP-Rule" id="MF_01363"/>
    </source>
</evidence>
<evidence type="ECO:0000305" key="2"/>
<comment type="function">
    <text evidence="1">This protein binds to 23S rRNA in the presence of protein L20.</text>
</comment>
<comment type="subunit">
    <text evidence="1">Part of the 50S ribosomal subunit. Contacts protein L20.</text>
</comment>
<comment type="similarity">
    <text evidence="1">Belongs to the bacterial ribosomal protein bL21 family.</text>
</comment>
<comment type="sequence caution" evidence="2">
    <conflict type="erroneous initiation">
        <sequence resource="EMBL-CDS" id="AAO36561"/>
    </conflict>
</comment>
<dbReference type="EMBL" id="AE015927">
    <property type="protein sequence ID" value="AAO36561.1"/>
    <property type="status" value="ALT_INIT"/>
    <property type="molecule type" value="Genomic_DNA"/>
</dbReference>
<dbReference type="RefSeq" id="WP_011100219.1">
    <property type="nucleotide sequence ID" value="NC_004557.1"/>
</dbReference>
<dbReference type="SMR" id="Q892N4"/>
<dbReference type="STRING" id="212717.CTC_02060"/>
<dbReference type="GeneID" id="24253065"/>
<dbReference type="KEGG" id="ctc:CTC_02060"/>
<dbReference type="HOGENOM" id="CLU_061463_3_0_9"/>
<dbReference type="OrthoDB" id="9813334at2"/>
<dbReference type="Proteomes" id="UP000001412">
    <property type="component" value="Chromosome"/>
</dbReference>
<dbReference type="GO" id="GO:0005737">
    <property type="term" value="C:cytoplasm"/>
    <property type="evidence" value="ECO:0007669"/>
    <property type="project" value="UniProtKB-ARBA"/>
</dbReference>
<dbReference type="GO" id="GO:1990904">
    <property type="term" value="C:ribonucleoprotein complex"/>
    <property type="evidence" value="ECO:0007669"/>
    <property type="project" value="UniProtKB-KW"/>
</dbReference>
<dbReference type="GO" id="GO:0005840">
    <property type="term" value="C:ribosome"/>
    <property type="evidence" value="ECO:0007669"/>
    <property type="project" value="UniProtKB-KW"/>
</dbReference>
<dbReference type="GO" id="GO:0019843">
    <property type="term" value="F:rRNA binding"/>
    <property type="evidence" value="ECO:0007669"/>
    <property type="project" value="UniProtKB-UniRule"/>
</dbReference>
<dbReference type="GO" id="GO:0003735">
    <property type="term" value="F:structural constituent of ribosome"/>
    <property type="evidence" value="ECO:0007669"/>
    <property type="project" value="InterPro"/>
</dbReference>
<dbReference type="GO" id="GO:0006412">
    <property type="term" value="P:translation"/>
    <property type="evidence" value="ECO:0007669"/>
    <property type="project" value="UniProtKB-UniRule"/>
</dbReference>
<dbReference type="HAMAP" id="MF_01363">
    <property type="entry name" value="Ribosomal_bL21"/>
    <property type="match status" value="1"/>
</dbReference>
<dbReference type="InterPro" id="IPR028909">
    <property type="entry name" value="bL21-like"/>
</dbReference>
<dbReference type="InterPro" id="IPR036164">
    <property type="entry name" value="bL21-like_sf"/>
</dbReference>
<dbReference type="InterPro" id="IPR001787">
    <property type="entry name" value="Ribosomal_bL21"/>
</dbReference>
<dbReference type="InterPro" id="IPR018258">
    <property type="entry name" value="Ribosomal_bL21_CS"/>
</dbReference>
<dbReference type="NCBIfam" id="TIGR00061">
    <property type="entry name" value="L21"/>
    <property type="match status" value="1"/>
</dbReference>
<dbReference type="PANTHER" id="PTHR21349">
    <property type="entry name" value="50S RIBOSOMAL PROTEIN L21"/>
    <property type="match status" value="1"/>
</dbReference>
<dbReference type="PANTHER" id="PTHR21349:SF0">
    <property type="entry name" value="LARGE RIBOSOMAL SUBUNIT PROTEIN BL21M"/>
    <property type="match status" value="1"/>
</dbReference>
<dbReference type="Pfam" id="PF00829">
    <property type="entry name" value="Ribosomal_L21p"/>
    <property type="match status" value="1"/>
</dbReference>
<dbReference type="SUPFAM" id="SSF141091">
    <property type="entry name" value="L21p-like"/>
    <property type="match status" value="1"/>
</dbReference>
<dbReference type="PROSITE" id="PS01169">
    <property type="entry name" value="RIBOSOMAL_L21"/>
    <property type="match status" value="1"/>
</dbReference>
<accession>Q892N4</accession>
<gene>
    <name evidence="1" type="primary">rplU</name>
    <name type="ordered locus">CTC_02060</name>
</gene>
<reference key="1">
    <citation type="journal article" date="2003" name="Proc. Natl. Acad. Sci. U.S.A.">
        <title>The genome sequence of Clostridium tetani, the causative agent of tetanus disease.</title>
        <authorList>
            <person name="Brueggemann H."/>
            <person name="Baeumer S."/>
            <person name="Fricke W.F."/>
            <person name="Wiezer A."/>
            <person name="Liesegang H."/>
            <person name="Decker I."/>
            <person name="Herzberg C."/>
            <person name="Martinez-Arias R."/>
            <person name="Merkl R."/>
            <person name="Henne A."/>
            <person name="Gottschalk G."/>
        </authorList>
    </citation>
    <scope>NUCLEOTIDE SEQUENCE [LARGE SCALE GENOMIC DNA]</scope>
    <source>
        <strain>Massachusetts / E88</strain>
    </source>
</reference>
<feature type="chain" id="PRO_0000269307" description="Large ribosomal subunit protein bL21">
    <location>
        <begin position="1"/>
        <end position="104"/>
    </location>
</feature>